<sequence length="251" mass="27965">MSEGTQNSTHFGYKTVEAEQKADMVAGVFHSVAAKYDIMNDVMSFGIHRMWKRFTIESAGARPGMKVLDLAGGTGDLTAKFSHLVGDKGQVTLADINDSMLKVGREKLRDKGIVGNVNYVQANAEALPFPDNHFDIITIAFGLRNVTDKDSAIRSMLRVLKPGGKLLILEFSKPQHDVMRKIYDLYSFKILPKMGSLITQDAESYEYLAESIRMHPDQDTLKGMMVDAGFEQVEYTNMTDGIVALHKGYKF</sequence>
<protein>
    <recommendedName>
        <fullName evidence="1">Ubiquinone/menaquinone biosynthesis C-methyltransferase UbiE</fullName>
        <ecNumber evidence="1">2.1.1.163</ecNumber>
        <ecNumber evidence="1">2.1.1.201</ecNumber>
    </recommendedName>
    <alternativeName>
        <fullName evidence="1">2-methoxy-6-polyprenyl-1,4-benzoquinol methylase</fullName>
    </alternativeName>
    <alternativeName>
        <fullName evidence="1">Demethylmenaquinone methyltransferase</fullName>
    </alternativeName>
</protein>
<feature type="chain" id="PRO_1000088298" description="Ubiquinone/menaquinone biosynthesis C-methyltransferase UbiE">
    <location>
        <begin position="1"/>
        <end position="251"/>
    </location>
</feature>
<feature type="binding site" evidence="1">
    <location>
        <position position="74"/>
    </location>
    <ligand>
        <name>S-adenosyl-L-methionine</name>
        <dbReference type="ChEBI" id="CHEBI:59789"/>
    </ligand>
</feature>
<feature type="binding site" evidence="1">
    <location>
        <position position="95"/>
    </location>
    <ligand>
        <name>S-adenosyl-L-methionine</name>
        <dbReference type="ChEBI" id="CHEBI:59789"/>
    </ligand>
</feature>
<feature type="binding site" evidence="1">
    <location>
        <begin position="123"/>
        <end position="124"/>
    </location>
    <ligand>
        <name>S-adenosyl-L-methionine</name>
        <dbReference type="ChEBI" id="CHEBI:59789"/>
    </ligand>
</feature>
<organism>
    <name type="scientific">Shewanella sediminis (strain HAW-EB3)</name>
    <dbReference type="NCBI Taxonomy" id="425104"/>
    <lineage>
        <taxon>Bacteria</taxon>
        <taxon>Pseudomonadati</taxon>
        <taxon>Pseudomonadota</taxon>
        <taxon>Gammaproteobacteria</taxon>
        <taxon>Alteromonadales</taxon>
        <taxon>Shewanellaceae</taxon>
        <taxon>Shewanella</taxon>
    </lineage>
</organism>
<comment type="function">
    <text evidence="1">Methyltransferase required for the conversion of demethylmenaquinol (DMKH2) to menaquinol (MKH2) and the conversion of 2-polyprenyl-6-methoxy-1,4-benzoquinol (DDMQH2) to 2-polyprenyl-3-methyl-6-methoxy-1,4-benzoquinol (DMQH2).</text>
</comment>
<comment type="catalytic activity">
    <reaction evidence="1">
        <text>a 2-demethylmenaquinol + S-adenosyl-L-methionine = a menaquinol + S-adenosyl-L-homocysteine + H(+)</text>
        <dbReference type="Rhea" id="RHEA:42640"/>
        <dbReference type="Rhea" id="RHEA-COMP:9539"/>
        <dbReference type="Rhea" id="RHEA-COMP:9563"/>
        <dbReference type="ChEBI" id="CHEBI:15378"/>
        <dbReference type="ChEBI" id="CHEBI:18151"/>
        <dbReference type="ChEBI" id="CHEBI:55437"/>
        <dbReference type="ChEBI" id="CHEBI:57856"/>
        <dbReference type="ChEBI" id="CHEBI:59789"/>
        <dbReference type="EC" id="2.1.1.163"/>
    </reaction>
</comment>
<comment type="catalytic activity">
    <reaction evidence="1">
        <text>a 2-methoxy-6-(all-trans-polyprenyl)benzene-1,4-diol + S-adenosyl-L-methionine = a 5-methoxy-2-methyl-3-(all-trans-polyprenyl)benzene-1,4-diol + S-adenosyl-L-homocysteine + H(+)</text>
        <dbReference type="Rhea" id="RHEA:28286"/>
        <dbReference type="Rhea" id="RHEA-COMP:10858"/>
        <dbReference type="Rhea" id="RHEA-COMP:10859"/>
        <dbReference type="ChEBI" id="CHEBI:15378"/>
        <dbReference type="ChEBI" id="CHEBI:57856"/>
        <dbReference type="ChEBI" id="CHEBI:59789"/>
        <dbReference type="ChEBI" id="CHEBI:84166"/>
        <dbReference type="ChEBI" id="CHEBI:84167"/>
        <dbReference type="EC" id="2.1.1.201"/>
    </reaction>
</comment>
<comment type="pathway">
    <text evidence="1">Quinol/quinone metabolism; menaquinone biosynthesis; menaquinol from 1,4-dihydroxy-2-naphthoate: step 2/2.</text>
</comment>
<comment type="pathway">
    <text evidence="1">Cofactor biosynthesis; ubiquinone biosynthesis.</text>
</comment>
<comment type="similarity">
    <text evidence="1">Belongs to the class I-like SAM-binding methyltransferase superfamily. MenG/UbiE family.</text>
</comment>
<keyword id="KW-0474">Menaquinone biosynthesis</keyword>
<keyword id="KW-0489">Methyltransferase</keyword>
<keyword id="KW-1185">Reference proteome</keyword>
<keyword id="KW-0949">S-adenosyl-L-methionine</keyword>
<keyword id="KW-0808">Transferase</keyword>
<keyword id="KW-0831">Ubiquinone biosynthesis</keyword>
<evidence type="ECO:0000255" key="1">
    <source>
        <dbReference type="HAMAP-Rule" id="MF_01813"/>
    </source>
</evidence>
<accession>A8G0S7</accession>
<reference key="1">
    <citation type="submission" date="2007-08" db="EMBL/GenBank/DDBJ databases">
        <title>Complete sequence of Shewanella sediminis HAW-EB3.</title>
        <authorList>
            <consortium name="US DOE Joint Genome Institute"/>
            <person name="Copeland A."/>
            <person name="Lucas S."/>
            <person name="Lapidus A."/>
            <person name="Barry K."/>
            <person name="Glavina del Rio T."/>
            <person name="Dalin E."/>
            <person name="Tice H."/>
            <person name="Pitluck S."/>
            <person name="Chertkov O."/>
            <person name="Brettin T."/>
            <person name="Bruce D."/>
            <person name="Detter J.C."/>
            <person name="Han C."/>
            <person name="Schmutz J."/>
            <person name="Larimer F."/>
            <person name="Land M."/>
            <person name="Hauser L."/>
            <person name="Kyrpides N."/>
            <person name="Kim E."/>
            <person name="Zhao J.-S."/>
            <person name="Richardson P."/>
        </authorList>
    </citation>
    <scope>NUCLEOTIDE SEQUENCE [LARGE SCALE GENOMIC DNA]</scope>
    <source>
        <strain>HAW-EB3</strain>
    </source>
</reference>
<dbReference type="EC" id="2.1.1.163" evidence="1"/>
<dbReference type="EC" id="2.1.1.201" evidence="1"/>
<dbReference type="EMBL" id="CP000821">
    <property type="protein sequence ID" value="ABV38700.1"/>
    <property type="molecule type" value="Genomic_DNA"/>
</dbReference>
<dbReference type="RefSeq" id="WP_012144430.1">
    <property type="nucleotide sequence ID" value="NC_009831.1"/>
</dbReference>
<dbReference type="SMR" id="A8G0S7"/>
<dbReference type="STRING" id="425104.Ssed_4096"/>
<dbReference type="KEGG" id="sse:Ssed_4096"/>
<dbReference type="eggNOG" id="COG2226">
    <property type="taxonomic scope" value="Bacteria"/>
</dbReference>
<dbReference type="HOGENOM" id="CLU_037990_0_0_6"/>
<dbReference type="OrthoDB" id="9808140at2"/>
<dbReference type="UniPathway" id="UPA00079">
    <property type="reaction ID" value="UER00169"/>
</dbReference>
<dbReference type="UniPathway" id="UPA00232"/>
<dbReference type="Proteomes" id="UP000002015">
    <property type="component" value="Chromosome"/>
</dbReference>
<dbReference type="GO" id="GO:0008425">
    <property type="term" value="F:2-methoxy-6-polyprenyl-1,4-benzoquinol methyltransferase activity"/>
    <property type="evidence" value="ECO:0007669"/>
    <property type="project" value="UniProtKB-UniRule"/>
</dbReference>
<dbReference type="GO" id="GO:0043770">
    <property type="term" value="F:demethylmenaquinone methyltransferase activity"/>
    <property type="evidence" value="ECO:0007669"/>
    <property type="project" value="UniProtKB-UniRule"/>
</dbReference>
<dbReference type="GO" id="GO:0009060">
    <property type="term" value="P:aerobic respiration"/>
    <property type="evidence" value="ECO:0007669"/>
    <property type="project" value="UniProtKB-UniRule"/>
</dbReference>
<dbReference type="GO" id="GO:0009234">
    <property type="term" value="P:menaquinone biosynthetic process"/>
    <property type="evidence" value="ECO:0007669"/>
    <property type="project" value="UniProtKB-UniRule"/>
</dbReference>
<dbReference type="GO" id="GO:0032259">
    <property type="term" value="P:methylation"/>
    <property type="evidence" value="ECO:0007669"/>
    <property type="project" value="UniProtKB-KW"/>
</dbReference>
<dbReference type="CDD" id="cd02440">
    <property type="entry name" value="AdoMet_MTases"/>
    <property type="match status" value="1"/>
</dbReference>
<dbReference type="FunFam" id="3.40.50.150:FF:000014">
    <property type="entry name" value="Ubiquinone/menaquinone biosynthesis C-methyltransferase UbiE"/>
    <property type="match status" value="1"/>
</dbReference>
<dbReference type="Gene3D" id="3.40.50.150">
    <property type="entry name" value="Vaccinia Virus protein VP39"/>
    <property type="match status" value="1"/>
</dbReference>
<dbReference type="HAMAP" id="MF_01813">
    <property type="entry name" value="MenG_UbiE_methyltr"/>
    <property type="match status" value="1"/>
</dbReference>
<dbReference type="InterPro" id="IPR029063">
    <property type="entry name" value="SAM-dependent_MTases_sf"/>
</dbReference>
<dbReference type="InterPro" id="IPR004033">
    <property type="entry name" value="UbiE/COQ5_MeTrFase"/>
</dbReference>
<dbReference type="InterPro" id="IPR023576">
    <property type="entry name" value="UbiE/COQ5_MeTrFase_CS"/>
</dbReference>
<dbReference type="NCBIfam" id="TIGR01934">
    <property type="entry name" value="MenG_MenH_UbiE"/>
    <property type="match status" value="1"/>
</dbReference>
<dbReference type="NCBIfam" id="NF001240">
    <property type="entry name" value="PRK00216.1-1"/>
    <property type="match status" value="1"/>
</dbReference>
<dbReference type="NCBIfam" id="NF001242">
    <property type="entry name" value="PRK00216.1-3"/>
    <property type="match status" value="1"/>
</dbReference>
<dbReference type="NCBIfam" id="NF001244">
    <property type="entry name" value="PRK00216.1-5"/>
    <property type="match status" value="1"/>
</dbReference>
<dbReference type="PANTHER" id="PTHR43591:SF24">
    <property type="entry name" value="2-METHOXY-6-POLYPRENYL-1,4-BENZOQUINOL METHYLASE, MITOCHONDRIAL"/>
    <property type="match status" value="1"/>
</dbReference>
<dbReference type="PANTHER" id="PTHR43591">
    <property type="entry name" value="METHYLTRANSFERASE"/>
    <property type="match status" value="1"/>
</dbReference>
<dbReference type="Pfam" id="PF01209">
    <property type="entry name" value="Ubie_methyltran"/>
    <property type="match status" value="1"/>
</dbReference>
<dbReference type="SUPFAM" id="SSF53335">
    <property type="entry name" value="S-adenosyl-L-methionine-dependent methyltransferases"/>
    <property type="match status" value="1"/>
</dbReference>
<dbReference type="PROSITE" id="PS51608">
    <property type="entry name" value="SAM_MT_UBIE"/>
    <property type="match status" value="1"/>
</dbReference>
<dbReference type="PROSITE" id="PS01183">
    <property type="entry name" value="UBIE_1"/>
    <property type="match status" value="1"/>
</dbReference>
<dbReference type="PROSITE" id="PS01184">
    <property type="entry name" value="UBIE_2"/>
    <property type="match status" value="1"/>
</dbReference>
<proteinExistence type="inferred from homology"/>
<name>UBIE_SHESH</name>
<gene>
    <name evidence="1" type="primary">ubiE</name>
    <name type="ordered locus">Ssed_4096</name>
</gene>